<comment type="function">
    <text evidence="1">Antimicrobial peptide with a broad-spectrum antimicrobial activity. Keeps its antibacterial activity under a wide range of salt concentrations that mimic physiological conditions of human blood, which is surprising, since Hydra is an obligate freshwater animal with nearly no salt tolerance. Does not affect red blood cells.</text>
</comment>
<comment type="subcellular location">
    <subcellularLocation>
        <location evidence="1">Secreted</location>
    </subcellularLocation>
    <subcellularLocation>
        <location evidence="1">Target cell membrane</location>
    </subcellularLocation>
</comment>
<comment type="tissue specificity">
    <text evidence="1 5">Expressed in entodermal epithelium along the body column.</text>
</comment>
<comment type="similarity">
    <text evidence="4">Belongs to the arminin family.</text>
</comment>
<keyword id="KW-0027">Amidation</keyword>
<keyword id="KW-0044">Antibiotic</keyword>
<keyword id="KW-0929">Antimicrobial</keyword>
<keyword id="KW-0391">Immunity</keyword>
<keyword id="KW-0399">Innate immunity</keyword>
<keyword id="KW-0472">Membrane</keyword>
<keyword id="KW-0964">Secreted</keyword>
<keyword id="KW-0732">Signal</keyword>
<keyword id="KW-1052">Target cell membrane</keyword>
<keyword id="KW-1053">Target membrane</keyword>
<accession>R9UE59</accession>
<name>ARM75_HYDOL</name>
<organism>
    <name type="scientific">Hydra oligactis</name>
    <name type="common">Brown hydra</name>
    <dbReference type="NCBI Taxonomy" id="6088"/>
    <lineage>
        <taxon>Eukaryota</taxon>
        <taxon>Metazoa</taxon>
        <taxon>Cnidaria</taxon>
        <taxon>Hydrozoa</taxon>
        <taxon>Hydroidolina</taxon>
        <taxon>Anthoathecata</taxon>
        <taxon>Aplanulata</taxon>
        <taxon>Hydridae</taxon>
        <taxon>Hydra</taxon>
    </lineage>
</organism>
<proteinExistence type="inferred from homology"/>
<feature type="signal peptide" evidence="2">
    <location>
        <begin position="1"/>
        <end position="18"/>
    </location>
</feature>
<feature type="propeptide" id="PRO_0000461977" evidence="1">
    <location>
        <begin position="19"/>
        <end position="57"/>
    </location>
</feature>
<feature type="peptide" id="PRO_5004490227" description="Arminin 375" evidence="1">
    <location>
        <begin position="58"/>
        <end position="86"/>
    </location>
</feature>
<feature type="modified residue" description="Alanine amide" evidence="1">
    <location>
        <position position="86"/>
    </location>
</feature>
<sequence length="89" mass="10705">MKAVFAILFLAFIALTYAKSYDEVKEEIKNEVEREIFEDLEEESDELDNYVEESNDAKPWRRWRRAVRRIRWRKVVPYIPAIVRAAGKK</sequence>
<evidence type="ECO:0000250" key="1">
    <source>
        <dbReference type="UniProtKB" id="D2XUU4"/>
    </source>
</evidence>
<evidence type="ECO:0000255" key="2"/>
<evidence type="ECO:0000303" key="3">
    <source>
    </source>
</evidence>
<evidence type="ECO:0000305" key="4"/>
<evidence type="ECO:0000305" key="5">
    <source>
    </source>
</evidence>
<evidence type="ECO:0000312" key="6">
    <source>
        <dbReference type="EMBL" id="AGN53404.1"/>
    </source>
</evidence>
<reference evidence="6" key="1">
    <citation type="journal article" date="2013" name="Proc. Natl. Acad. Sci. U.S.A.">
        <title>Distinct antimicrobial peptide expression determines host species-specific bacterial associations.</title>
        <authorList>
            <person name="Franzenburg S."/>
            <person name="Walter J."/>
            <person name="Kunzel S."/>
            <person name="Wang J."/>
            <person name="Baines J.F."/>
            <person name="Bosch T.C."/>
            <person name="Fraune S."/>
        </authorList>
    </citation>
    <scope>NUCLEOTIDE SEQUENCE [MRNA]</scope>
    <source>
        <strain>AEP</strain>
    </source>
</reference>
<protein>
    <recommendedName>
        <fullName evidence="3">Arminin 375</fullName>
    </recommendedName>
</protein>
<dbReference type="EMBL" id="KC701497">
    <property type="protein sequence ID" value="AGN53404.1"/>
    <property type="molecule type" value="mRNA"/>
</dbReference>
<dbReference type="GO" id="GO:0005576">
    <property type="term" value="C:extracellular region"/>
    <property type="evidence" value="ECO:0007669"/>
    <property type="project" value="UniProtKB-SubCell"/>
</dbReference>